<sequence length="355" mass="40180">MRTWKMRKDGQRIDYLGRKWRNLGGPFMEVSRVVTWIIIITLVALAIKTILPFFSPLFFAFITAYALYPLHIKLKERIGSKNSAILLTLFLLLGALMILLILVYTLTPVIGQAYDYLTNLEKIKINIPLVPKSVISSLEGVIDEFIERGKGYLVSLTFSVPKYLLQVIVYLTFVYFFLVKEKEARELITFEDEKLIRIIERGNLTLQALIRVWLLLNIVKGILMTLGFLIFKVSNLPTAILAGLLTVLFSFIPLFEGWMIWLAGAFYLVKQGHIIAGIGLAVYGFTLVSPLPDFTIRPKLVAREAEFNDVLVLIGMIGGTWGLGLKGLIIGPIVLNVAIEMLREWKNVQAKTERS</sequence>
<accession>O58728</accession>
<comment type="subcellular location">
    <subcellularLocation>
        <location evidence="2">Cell membrane</location>
        <topology evidence="2">Multi-pass membrane protein</topology>
    </subcellularLocation>
</comment>
<comment type="similarity">
    <text evidence="2">Belongs to the autoinducer-2 exporter (AI-2E) (TC 2.A.86) family.</text>
</comment>
<keyword id="KW-1003">Cell membrane</keyword>
<keyword id="KW-0472">Membrane</keyword>
<keyword id="KW-0812">Transmembrane</keyword>
<keyword id="KW-1133">Transmembrane helix</keyword>
<keyword id="KW-0813">Transport</keyword>
<gene>
    <name type="ordered locus">PH1000</name>
</gene>
<protein>
    <recommendedName>
        <fullName>Putative transport protein PH1000</fullName>
    </recommendedName>
</protein>
<dbReference type="EMBL" id="BA000001">
    <property type="protein sequence ID" value="BAA30097.1"/>
    <property type="molecule type" value="Genomic_DNA"/>
</dbReference>
<dbReference type="PIR" id="C71092">
    <property type="entry name" value="C71092"/>
</dbReference>
<dbReference type="RefSeq" id="WP_010885087.1">
    <property type="nucleotide sequence ID" value="NC_000961.1"/>
</dbReference>
<dbReference type="SMR" id="O58728"/>
<dbReference type="STRING" id="70601.gene:9377956"/>
<dbReference type="EnsemblBacteria" id="BAA30097">
    <property type="protein sequence ID" value="BAA30097"/>
    <property type="gene ID" value="BAA30097"/>
</dbReference>
<dbReference type="GeneID" id="1443322"/>
<dbReference type="KEGG" id="pho:PH1000"/>
<dbReference type="eggNOG" id="arCOG02642">
    <property type="taxonomic scope" value="Archaea"/>
</dbReference>
<dbReference type="OrthoDB" id="137390at2157"/>
<dbReference type="Proteomes" id="UP000000752">
    <property type="component" value="Chromosome"/>
</dbReference>
<dbReference type="GO" id="GO:0005886">
    <property type="term" value="C:plasma membrane"/>
    <property type="evidence" value="ECO:0007669"/>
    <property type="project" value="UniProtKB-SubCell"/>
</dbReference>
<dbReference type="InterPro" id="IPR002549">
    <property type="entry name" value="AI-2E-like"/>
</dbReference>
<dbReference type="PANTHER" id="PTHR21716">
    <property type="entry name" value="TRANSMEMBRANE PROTEIN"/>
    <property type="match status" value="1"/>
</dbReference>
<dbReference type="PANTHER" id="PTHR21716:SF71">
    <property type="entry name" value="TRANSPORT PROTEIN MJ1177-RELATED"/>
    <property type="match status" value="1"/>
</dbReference>
<dbReference type="Pfam" id="PF01594">
    <property type="entry name" value="AI-2E_transport"/>
    <property type="match status" value="1"/>
</dbReference>
<name>YA00_PYRHO</name>
<feature type="chain" id="PRO_0000148328" description="Putative transport protein PH1000">
    <location>
        <begin position="1"/>
        <end position="355"/>
    </location>
</feature>
<feature type="transmembrane region" description="Helical" evidence="1">
    <location>
        <begin position="34"/>
        <end position="54"/>
    </location>
</feature>
<feature type="transmembrane region" description="Helical" evidence="1">
    <location>
        <begin position="55"/>
        <end position="75"/>
    </location>
</feature>
<feature type="transmembrane region" description="Helical" evidence="1">
    <location>
        <begin position="84"/>
        <end position="104"/>
    </location>
</feature>
<feature type="transmembrane region" description="Helical" evidence="1">
    <location>
        <begin position="158"/>
        <end position="178"/>
    </location>
</feature>
<feature type="transmembrane region" description="Helical" evidence="1">
    <location>
        <begin position="212"/>
        <end position="232"/>
    </location>
</feature>
<feature type="transmembrane region" description="Helical" evidence="1">
    <location>
        <begin position="240"/>
        <end position="260"/>
    </location>
</feature>
<feature type="transmembrane region" description="Helical" evidence="1">
    <location>
        <begin position="274"/>
        <end position="294"/>
    </location>
</feature>
<feature type="transmembrane region" description="Helical" evidence="1">
    <location>
        <begin position="310"/>
        <end position="330"/>
    </location>
</feature>
<reference key="1">
    <citation type="journal article" date="1998" name="DNA Res.">
        <title>Complete sequence and gene organization of the genome of a hyper-thermophilic archaebacterium, Pyrococcus horikoshii OT3.</title>
        <authorList>
            <person name="Kawarabayasi Y."/>
            <person name="Sawada M."/>
            <person name="Horikawa H."/>
            <person name="Haikawa Y."/>
            <person name="Hino Y."/>
            <person name="Yamamoto S."/>
            <person name="Sekine M."/>
            <person name="Baba S."/>
            <person name="Kosugi H."/>
            <person name="Hosoyama A."/>
            <person name="Nagai Y."/>
            <person name="Sakai M."/>
            <person name="Ogura K."/>
            <person name="Otsuka R."/>
            <person name="Nakazawa H."/>
            <person name="Takamiya M."/>
            <person name="Ohfuku Y."/>
            <person name="Funahashi T."/>
            <person name="Tanaka T."/>
            <person name="Kudoh Y."/>
            <person name="Yamazaki J."/>
            <person name="Kushida N."/>
            <person name="Oguchi A."/>
            <person name="Aoki K."/>
            <person name="Yoshizawa T."/>
            <person name="Nakamura Y."/>
            <person name="Robb F.T."/>
            <person name="Horikoshi K."/>
            <person name="Masuchi Y."/>
            <person name="Shizuya H."/>
            <person name="Kikuchi H."/>
        </authorList>
    </citation>
    <scope>NUCLEOTIDE SEQUENCE [LARGE SCALE GENOMIC DNA]</scope>
    <source>
        <strain>ATCC 700860 / DSM 12428 / JCM 9974 / NBRC 100139 / OT-3</strain>
    </source>
</reference>
<proteinExistence type="inferred from homology"/>
<organism>
    <name type="scientific">Pyrococcus horikoshii (strain ATCC 700860 / DSM 12428 / JCM 9974 / NBRC 100139 / OT-3)</name>
    <dbReference type="NCBI Taxonomy" id="70601"/>
    <lineage>
        <taxon>Archaea</taxon>
        <taxon>Methanobacteriati</taxon>
        <taxon>Methanobacteriota</taxon>
        <taxon>Thermococci</taxon>
        <taxon>Thermococcales</taxon>
        <taxon>Thermococcaceae</taxon>
        <taxon>Pyrococcus</taxon>
    </lineage>
</organism>
<evidence type="ECO:0000255" key="1"/>
<evidence type="ECO:0000305" key="2"/>